<accession>A0QU35</accession>
<accession>I7FI80</accession>
<feature type="chain" id="PRO_0000376281" description="NADH-quinone oxidoreductase subunit B">
    <location>
        <begin position="1"/>
        <end position="184"/>
    </location>
</feature>
<feature type="binding site" evidence="1">
    <location>
        <position position="37"/>
    </location>
    <ligand>
        <name>[4Fe-4S] cluster</name>
        <dbReference type="ChEBI" id="CHEBI:49883"/>
    </ligand>
</feature>
<feature type="binding site" evidence="1">
    <location>
        <position position="38"/>
    </location>
    <ligand>
        <name>[4Fe-4S] cluster</name>
        <dbReference type="ChEBI" id="CHEBI:49883"/>
    </ligand>
</feature>
<feature type="binding site" evidence="1">
    <location>
        <position position="103"/>
    </location>
    <ligand>
        <name>[4Fe-4S] cluster</name>
        <dbReference type="ChEBI" id="CHEBI:49883"/>
    </ligand>
</feature>
<feature type="binding site" evidence="1">
    <location>
        <position position="132"/>
    </location>
    <ligand>
        <name>[4Fe-4S] cluster</name>
        <dbReference type="ChEBI" id="CHEBI:49883"/>
    </ligand>
</feature>
<feature type="helix" evidence="2">
    <location>
        <begin position="3"/>
        <end position="5"/>
    </location>
</feature>
<feature type="helix" evidence="2">
    <location>
        <begin position="11"/>
        <end position="25"/>
    </location>
</feature>
<feature type="strand" evidence="2">
    <location>
        <begin position="30"/>
        <end position="32"/>
    </location>
</feature>
<feature type="helix" evidence="2">
    <location>
        <begin position="37"/>
        <end position="46"/>
    </location>
</feature>
<feature type="helix" evidence="2">
    <location>
        <begin position="52"/>
        <end position="55"/>
    </location>
</feature>
<feature type="strand" evidence="2">
    <location>
        <begin position="61"/>
        <end position="63"/>
    </location>
</feature>
<feature type="turn" evidence="2">
    <location>
        <begin position="64"/>
        <end position="66"/>
    </location>
</feature>
<feature type="strand" evidence="2">
    <location>
        <begin position="69"/>
        <end position="71"/>
    </location>
</feature>
<feature type="helix" evidence="2">
    <location>
        <begin position="78"/>
        <end position="80"/>
    </location>
</feature>
<feature type="helix" evidence="2">
    <location>
        <begin position="81"/>
        <end position="90"/>
    </location>
</feature>
<feature type="strand" evidence="2">
    <location>
        <begin position="96"/>
        <end position="100"/>
    </location>
</feature>
<feature type="helix" evidence="2">
    <location>
        <begin position="101"/>
        <end position="106"/>
    </location>
</feature>
<feature type="strand" evidence="3">
    <location>
        <begin position="112"/>
        <end position="115"/>
    </location>
</feature>
<feature type="helix" evidence="2">
    <location>
        <begin position="119"/>
        <end position="121"/>
    </location>
</feature>
<feature type="strand" evidence="2">
    <location>
        <begin position="126"/>
        <end position="129"/>
    </location>
</feature>
<feature type="helix" evidence="2">
    <location>
        <begin position="136"/>
        <end position="151"/>
    </location>
</feature>
<feature type="helix" evidence="2">
    <location>
        <begin position="156"/>
        <end position="172"/>
    </location>
</feature>
<feature type="helix" evidence="2">
    <location>
        <begin position="176"/>
        <end position="178"/>
    </location>
</feature>
<organism>
    <name type="scientific">Mycolicibacterium smegmatis (strain ATCC 700084 / mc(2)155)</name>
    <name type="common">Mycobacterium smegmatis</name>
    <dbReference type="NCBI Taxonomy" id="246196"/>
    <lineage>
        <taxon>Bacteria</taxon>
        <taxon>Bacillati</taxon>
        <taxon>Actinomycetota</taxon>
        <taxon>Actinomycetes</taxon>
        <taxon>Mycobacteriales</taxon>
        <taxon>Mycobacteriaceae</taxon>
        <taxon>Mycolicibacterium</taxon>
    </lineage>
</organism>
<reference key="1">
    <citation type="submission" date="2006-10" db="EMBL/GenBank/DDBJ databases">
        <authorList>
            <person name="Fleischmann R.D."/>
            <person name="Dodson R.J."/>
            <person name="Haft D.H."/>
            <person name="Merkel J.S."/>
            <person name="Nelson W.C."/>
            <person name="Fraser C.M."/>
        </authorList>
    </citation>
    <scope>NUCLEOTIDE SEQUENCE [LARGE SCALE GENOMIC DNA]</scope>
    <source>
        <strain>ATCC 700084 / mc(2)155</strain>
    </source>
</reference>
<reference key="2">
    <citation type="journal article" date="2007" name="Genome Biol.">
        <title>Interrupted coding sequences in Mycobacterium smegmatis: authentic mutations or sequencing errors?</title>
        <authorList>
            <person name="Deshayes C."/>
            <person name="Perrodou E."/>
            <person name="Gallien S."/>
            <person name="Euphrasie D."/>
            <person name="Schaeffer C."/>
            <person name="Van-Dorsselaer A."/>
            <person name="Poch O."/>
            <person name="Lecompte O."/>
            <person name="Reyrat J.-M."/>
        </authorList>
    </citation>
    <scope>NUCLEOTIDE SEQUENCE [LARGE SCALE GENOMIC DNA]</scope>
    <source>
        <strain>ATCC 700084 / mc(2)155</strain>
    </source>
</reference>
<reference key="3">
    <citation type="journal article" date="2009" name="Genome Res.">
        <title>Ortho-proteogenomics: multiple proteomes investigation through orthology and a new MS-based protocol.</title>
        <authorList>
            <person name="Gallien S."/>
            <person name="Perrodou E."/>
            <person name="Carapito C."/>
            <person name="Deshayes C."/>
            <person name="Reyrat J.-M."/>
            <person name="Van Dorsselaer A."/>
            <person name="Poch O."/>
            <person name="Schaeffer C."/>
            <person name="Lecompte O."/>
        </authorList>
    </citation>
    <scope>NUCLEOTIDE SEQUENCE [LARGE SCALE GENOMIC DNA]</scope>
    <source>
        <strain>ATCC 700084 / mc(2)155</strain>
    </source>
</reference>
<evidence type="ECO:0000255" key="1">
    <source>
        <dbReference type="HAMAP-Rule" id="MF_01356"/>
    </source>
</evidence>
<evidence type="ECO:0007829" key="2">
    <source>
        <dbReference type="PDB" id="8E9G"/>
    </source>
</evidence>
<evidence type="ECO:0007829" key="3">
    <source>
        <dbReference type="PDB" id="8E9I"/>
    </source>
</evidence>
<comment type="function">
    <text evidence="1">NDH-1 shuttles electrons from NADH, via FMN and iron-sulfur (Fe-S) centers, to quinones in the respiratory chain. The immediate electron acceptor for the enzyme in this species is believed to be a menaquinone. Couples the redox reaction to proton translocation (for every two electrons transferred, four hydrogen ions are translocated across the cytoplasmic membrane), and thus conserves the redox energy in a proton gradient.</text>
</comment>
<comment type="catalytic activity">
    <reaction evidence="1">
        <text>a quinone + NADH + 5 H(+)(in) = a quinol + NAD(+) + 4 H(+)(out)</text>
        <dbReference type="Rhea" id="RHEA:57888"/>
        <dbReference type="ChEBI" id="CHEBI:15378"/>
        <dbReference type="ChEBI" id="CHEBI:24646"/>
        <dbReference type="ChEBI" id="CHEBI:57540"/>
        <dbReference type="ChEBI" id="CHEBI:57945"/>
        <dbReference type="ChEBI" id="CHEBI:132124"/>
    </reaction>
</comment>
<comment type="cofactor">
    <cofactor evidence="1">
        <name>[4Fe-4S] cluster</name>
        <dbReference type="ChEBI" id="CHEBI:49883"/>
    </cofactor>
    <text evidence="1">Binds 1 [4Fe-4S] cluster.</text>
</comment>
<comment type="subunit">
    <text evidence="1">NDH-1 is composed of 14 different subunits. Subunits NuoB, C, D, E, F, and G constitute the peripheral sector of the complex.</text>
</comment>
<comment type="subcellular location">
    <subcellularLocation>
        <location evidence="1">Cell membrane</location>
        <topology evidence="1">Peripheral membrane protein</topology>
        <orientation evidence="1">Cytoplasmic side</orientation>
    </subcellularLocation>
</comment>
<comment type="similarity">
    <text evidence="1">Belongs to the complex I 20 kDa subunit family.</text>
</comment>
<dbReference type="EC" id="7.1.1.-" evidence="1"/>
<dbReference type="EMBL" id="CP000480">
    <property type="protein sequence ID" value="ABK69626.1"/>
    <property type="molecule type" value="Genomic_DNA"/>
</dbReference>
<dbReference type="EMBL" id="CP001663">
    <property type="protein sequence ID" value="AFP38488.1"/>
    <property type="molecule type" value="Genomic_DNA"/>
</dbReference>
<dbReference type="RefSeq" id="WP_003893431.1">
    <property type="nucleotide sequence ID" value="NZ_SIJM01000021.1"/>
</dbReference>
<dbReference type="RefSeq" id="YP_886423.1">
    <property type="nucleotide sequence ID" value="NC_008596.1"/>
</dbReference>
<dbReference type="PDB" id="8E9G">
    <property type="method" value="EM"/>
    <property type="resolution" value="2.60 A"/>
    <property type="chains" value="B=1-184"/>
</dbReference>
<dbReference type="PDB" id="8E9H">
    <property type="method" value="EM"/>
    <property type="resolution" value="2.70 A"/>
    <property type="chains" value="B=1-184"/>
</dbReference>
<dbReference type="PDB" id="8E9I">
    <property type="method" value="EM"/>
    <property type="resolution" value="2.80 A"/>
    <property type="chains" value="B=1-184"/>
</dbReference>
<dbReference type="PDBsum" id="8E9G"/>
<dbReference type="PDBsum" id="8E9H"/>
<dbReference type="PDBsum" id="8E9I"/>
<dbReference type="EMDB" id="EMD-27963"/>
<dbReference type="EMDB" id="EMD-27964"/>
<dbReference type="EMDB" id="EMD-27965"/>
<dbReference type="SMR" id="A0QU35"/>
<dbReference type="STRING" id="246196.MSMEG_2062"/>
<dbReference type="PaxDb" id="246196-MSMEI_2017"/>
<dbReference type="KEGG" id="msb:LJ00_10280"/>
<dbReference type="KEGG" id="msg:MSMEI_2017"/>
<dbReference type="KEGG" id="msm:MSMEG_2062"/>
<dbReference type="PATRIC" id="fig|246196.19.peg.2038"/>
<dbReference type="eggNOG" id="COG0377">
    <property type="taxonomic scope" value="Bacteria"/>
</dbReference>
<dbReference type="OrthoDB" id="9786737at2"/>
<dbReference type="Proteomes" id="UP000000757">
    <property type="component" value="Chromosome"/>
</dbReference>
<dbReference type="Proteomes" id="UP000006158">
    <property type="component" value="Chromosome"/>
</dbReference>
<dbReference type="GO" id="GO:0005886">
    <property type="term" value="C:plasma membrane"/>
    <property type="evidence" value="ECO:0007669"/>
    <property type="project" value="UniProtKB-SubCell"/>
</dbReference>
<dbReference type="GO" id="GO:0045271">
    <property type="term" value="C:respiratory chain complex I"/>
    <property type="evidence" value="ECO:0007669"/>
    <property type="project" value="TreeGrafter"/>
</dbReference>
<dbReference type="GO" id="GO:0051539">
    <property type="term" value="F:4 iron, 4 sulfur cluster binding"/>
    <property type="evidence" value="ECO:0007669"/>
    <property type="project" value="UniProtKB-KW"/>
</dbReference>
<dbReference type="GO" id="GO:0005506">
    <property type="term" value="F:iron ion binding"/>
    <property type="evidence" value="ECO:0007669"/>
    <property type="project" value="UniProtKB-UniRule"/>
</dbReference>
<dbReference type="GO" id="GO:0008137">
    <property type="term" value="F:NADH dehydrogenase (ubiquinone) activity"/>
    <property type="evidence" value="ECO:0007669"/>
    <property type="project" value="InterPro"/>
</dbReference>
<dbReference type="GO" id="GO:0050136">
    <property type="term" value="F:NADH:ubiquinone reductase (non-electrogenic) activity"/>
    <property type="evidence" value="ECO:0007669"/>
    <property type="project" value="UniProtKB-UniRule"/>
</dbReference>
<dbReference type="GO" id="GO:0048038">
    <property type="term" value="F:quinone binding"/>
    <property type="evidence" value="ECO:0007669"/>
    <property type="project" value="UniProtKB-KW"/>
</dbReference>
<dbReference type="GO" id="GO:0009060">
    <property type="term" value="P:aerobic respiration"/>
    <property type="evidence" value="ECO:0007669"/>
    <property type="project" value="TreeGrafter"/>
</dbReference>
<dbReference type="GO" id="GO:0015990">
    <property type="term" value="P:electron transport coupled proton transport"/>
    <property type="evidence" value="ECO:0007669"/>
    <property type="project" value="TreeGrafter"/>
</dbReference>
<dbReference type="FunFam" id="3.40.50.12280:FF:000004">
    <property type="entry name" value="NADH-quinone oxidoreductase subunit B"/>
    <property type="match status" value="1"/>
</dbReference>
<dbReference type="Gene3D" id="3.40.50.12280">
    <property type="match status" value="1"/>
</dbReference>
<dbReference type="HAMAP" id="MF_01356">
    <property type="entry name" value="NDH1_NuoB"/>
    <property type="match status" value="1"/>
</dbReference>
<dbReference type="InterPro" id="IPR006137">
    <property type="entry name" value="NADH_UbQ_OxRdtase-like_20kDa"/>
</dbReference>
<dbReference type="InterPro" id="IPR006138">
    <property type="entry name" value="NADH_UQ_OxRdtase_20Kd_su"/>
</dbReference>
<dbReference type="NCBIfam" id="TIGR01957">
    <property type="entry name" value="nuoB_fam"/>
    <property type="match status" value="1"/>
</dbReference>
<dbReference type="NCBIfam" id="NF005012">
    <property type="entry name" value="PRK06411.1"/>
    <property type="match status" value="1"/>
</dbReference>
<dbReference type="PANTHER" id="PTHR11995">
    <property type="entry name" value="NADH DEHYDROGENASE"/>
    <property type="match status" value="1"/>
</dbReference>
<dbReference type="PANTHER" id="PTHR11995:SF14">
    <property type="entry name" value="NADH DEHYDROGENASE [UBIQUINONE] IRON-SULFUR PROTEIN 7, MITOCHONDRIAL"/>
    <property type="match status" value="1"/>
</dbReference>
<dbReference type="Pfam" id="PF01058">
    <property type="entry name" value="Oxidored_q6"/>
    <property type="match status" value="1"/>
</dbReference>
<dbReference type="SUPFAM" id="SSF56770">
    <property type="entry name" value="HydA/Nqo6-like"/>
    <property type="match status" value="1"/>
</dbReference>
<dbReference type="PROSITE" id="PS01150">
    <property type="entry name" value="COMPLEX1_20K"/>
    <property type="match status" value="1"/>
</dbReference>
<gene>
    <name evidence="1" type="primary">nuoB</name>
    <name type="ordered locus">MSMEG_2062</name>
    <name type="ordered locus">MSMEI_2017</name>
</gene>
<protein>
    <recommendedName>
        <fullName evidence="1">NADH-quinone oxidoreductase subunit B</fullName>
        <ecNumber evidence="1">7.1.1.-</ecNumber>
    </recommendedName>
    <alternativeName>
        <fullName evidence="1">NADH dehydrogenase I subunit B</fullName>
    </alternativeName>
    <alternativeName>
        <fullName evidence="1">NDH-1 subunit B</fullName>
    </alternativeName>
</protein>
<name>NUOB_MYCS2</name>
<keyword id="KW-0002">3D-structure</keyword>
<keyword id="KW-0004">4Fe-4S</keyword>
<keyword id="KW-1003">Cell membrane</keyword>
<keyword id="KW-0408">Iron</keyword>
<keyword id="KW-0411">Iron-sulfur</keyword>
<keyword id="KW-0472">Membrane</keyword>
<keyword id="KW-0479">Metal-binding</keyword>
<keyword id="KW-0520">NAD</keyword>
<keyword id="KW-0874">Quinone</keyword>
<keyword id="KW-1185">Reference proteome</keyword>
<keyword id="KW-1278">Translocase</keyword>
<keyword id="KW-0813">Transport</keyword>
<proteinExistence type="evidence at protein level"/>
<sequence>MGLEERLPGGILLSTVETVAGYVRKGSLWPATFGLACCAIEMMSTAGPRFDIARFGMERFSATPRQADLMIVAGRVSQKMAPVLRQIYDQMVEPKWVLAMGVCASSGGMFNNYAVVQGVDHVVPVDIYLPGCPPRPEMLLHAILKLHDKIQQMPLGVNREEAIREAEQAALAVPPTIELKGLLR</sequence>